<protein>
    <recommendedName>
        <fullName evidence="1">Large ribosomal subunit protein uL23</fullName>
    </recommendedName>
    <alternativeName>
        <fullName evidence="2">50S ribosomal protein L23</fullName>
    </alternativeName>
</protein>
<dbReference type="EMBL" id="CP000930">
    <property type="protein sequence ID" value="ABZ83957.1"/>
    <property type="molecule type" value="Genomic_DNA"/>
</dbReference>
<dbReference type="RefSeq" id="WP_012282473.1">
    <property type="nucleotide sequence ID" value="NC_010337.2"/>
</dbReference>
<dbReference type="SMR" id="B0TC58"/>
<dbReference type="STRING" id="498761.HM1_1380"/>
<dbReference type="KEGG" id="hmo:HM1_1380"/>
<dbReference type="eggNOG" id="COG0089">
    <property type="taxonomic scope" value="Bacteria"/>
</dbReference>
<dbReference type="HOGENOM" id="CLU_037562_3_2_9"/>
<dbReference type="OrthoDB" id="9793353at2"/>
<dbReference type="Proteomes" id="UP000008550">
    <property type="component" value="Chromosome"/>
</dbReference>
<dbReference type="GO" id="GO:1990904">
    <property type="term" value="C:ribonucleoprotein complex"/>
    <property type="evidence" value="ECO:0007669"/>
    <property type="project" value="UniProtKB-KW"/>
</dbReference>
<dbReference type="GO" id="GO:0005840">
    <property type="term" value="C:ribosome"/>
    <property type="evidence" value="ECO:0007669"/>
    <property type="project" value="UniProtKB-KW"/>
</dbReference>
<dbReference type="GO" id="GO:0019843">
    <property type="term" value="F:rRNA binding"/>
    <property type="evidence" value="ECO:0007669"/>
    <property type="project" value="UniProtKB-UniRule"/>
</dbReference>
<dbReference type="GO" id="GO:0003735">
    <property type="term" value="F:structural constituent of ribosome"/>
    <property type="evidence" value="ECO:0007669"/>
    <property type="project" value="InterPro"/>
</dbReference>
<dbReference type="GO" id="GO:0006412">
    <property type="term" value="P:translation"/>
    <property type="evidence" value="ECO:0007669"/>
    <property type="project" value="UniProtKB-UniRule"/>
</dbReference>
<dbReference type="FunFam" id="3.30.70.330:FF:000001">
    <property type="entry name" value="50S ribosomal protein L23"/>
    <property type="match status" value="1"/>
</dbReference>
<dbReference type="Gene3D" id="3.30.70.330">
    <property type="match status" value="1"/>
</dbReference>
<dbReference type="HAMAP" id="MF_01369_B">
    <property type="entry name" value="Ribosomal_uL23_B"/>
    <property type="match status" value="1"/>
</dbReference>
<dbReference type="InterPro" id="IPR012677">
    <property type="entry name" value="Nucleotide-bd_a/b_plait_sf"/>
</dbReference>
<dbReference type="InterPro" id="IPR013025">
    <property type="entry name" value="Ribosomal_uL23-like"/>
</dbReference>
<dbReference type="InterPro" id="IPR012678">
    <property type="entry name" value="Ribosomal_uL23/eL15/eS24_sf"/>
</dbReference>
<dbReference type="InterPro" id="IPR001014">
    <property type="entry name" value="Ribosomal_uL23_CS"/>
</dbReference>
<dbReference type="NCBIfam" id="NF004359">
    <property type="entry name" value="PRK05738.1-3"/>
    <property type="match status" value="1"/>
</dbReference>
<dbReference type="NCBIfam" id="NF004363">
    <property type="entry name" value="PRK05738.2-4"/>
    <property type="match status" value="1"/>
</dbReference>
<dbReference type="NCBIfam" id="NF004366">
    <property type="entry name" value="PRK05738.3-2"/>
    <property type="match status" value="1"/>
</dbReference>
<dbReference type="PANTHER" id="PTHR11620">
    <property type="entry name" value="60S RIBOSOMAL PROTEIN L23A"/>
    <property type="match status" value="1"/>
</dbReference>
<dbReference type="Pfam" id="PF00276">
    <property type="entry name" value="Ribosomal_L23"/>
    <property type="match status" value="1"/>
</dbReference>
<dbReference type="SUPFAM" id="SSF54189">
    <property type="entry name" value="Ribosomal proteins S24e, L23 and L15e"/>
    <property type="match status" value="1"/>
</dbReference>
<dbReference type="PROSITE" id="PS00050">
    <property type="entry name" value="RIBOSOMAL_L23"/>
    <property type="match status" value="1"/>
</dbReference>
<reference key="1">
    <citation type="journal article" date="2008" name="J. Bacteriol.">
        <title>The genome of Heliobacterium modesticaldum, a phototrophic representative of the Firmicutes containing the simplest photosynthetic apparatus.</title>
        <authorList>
            <person name="Sattley W.M."/>
            <person name="Madigan M.T."/>
            <person name="Swingley W.D."/>
            <person name="Cheung P.C."/>
            <person name="Clocksin K.M."/>
            <person name="Conrad A.L."/>
            <person name="Dejesa L.C."/>
            <person name="Honchak B.M."/>
            <person name="Jung D.O."/>
            <person name="Karbach L.E."/>
            <person name="Kurdoglu A."/>
            <person name="Lahiri S."/>
            <person name="Mastrian S.D."/>
            <person name="Page L.E."/>
            <person name="Taylor H.L."/>
            <person name="Wang Z.T."/>
            <person name="Raymond J."/>
            <person name="Chen M."/>
            <person name="Blankenship R.E."/>
            <person name="Touchman J.W."/>
        </authorList>
    </citation>
    <scope>NUCLEOTIDE SEQUENCE [LARGE SCALE GENOMIC DNA]</scope>
    <source>
        <strain>ATCC 51547 / Ice1</strain>
    </source>
</reference>
<evidence type="ECO:0000255" key="1">
    <source>
        <dbReference type="HAMAP-Rule" id="MF_01369"/>
    </source>
</evidence>
<evidence type="ECO:0000305" key="2"/>
<gene>
    <name evidence="1" type="primary">rplW</name>
    <name type="ordered locus">Helmi_13320</name>
    <name type="ORF">HM1_1380</name>
</gene>
<comment type="function">
    <text evidence="1">One of the early assembly proteins it binds 23S rRNA. One of the proteins that surrounds the polypeptide exit tunnel on the outside of the ribosome. Forms the main docking site for trigger factor binding to the ribosome.</text>
</comment>
<comment type="subunit">
    <text evidence="1">Part of the 50S ribosomal subunit. Contacts protein L29, and trigger factor when it is bound to the ribosome.</text>
</comment>
<comment type="similarity">
    <text evidence="1">Belongs to the universal ribosomal protein uL23 family.</text>
</comment>
<name>RL23_HELMI</name>
<keyword id="KW-1185">Reference proteome</keyword>
<keyword id="KW-0687">Ribonucleoprotein</keyword>
<keyword id="KW-0689">Ribosomal protein</keyword>
<keyword id="KW-0694">RNA-binding</keyword>
<keyword id="KW-0699">rRNA-binding</keyword>
<feature type="chain" id="PRO_1000184087" description="Large ribosomal subunit protein uL23">
    <location>
        <begin position="1"/>
        <end position="95"/>
    </location>
</feature>
<accession>B0TC58</accession>
<proteinExistence type="inferred from homology"/>
<sequence length="95" mass="10860">MRSPYDVLKKPVITERSMDLAQENKYTFVVEPKANKIEIKHAVEQLFNVKVLDVHTMNVKGKPKRMGKYAGRTADKKKAIVTLKEGDKIEIFEGV</sequence>
<organism>
    <name type="scientific">Heliobacterium modesticaldum (strain ATCC 51547 / Ice1)</name>
    <dbReference type="NCBI Taxonomy" id="498761"/>
    <lineage>
        <taxon>Bacteria</taxon>
        <taxon>Bacillati</taxon>
        <taxon>Bacillota</taxon>
        <taxon>Clostridia</taxon>
        <taxon>Eubacteriales</taxon>
        <taxon>Heliobacteriaceae</taxon>
        <taxon>Heliomicrobium</taxon>
    </lineage>
</organism>